<reference key="1">
    <citation type="journal article" date="2005" name="PLoS Biol.">
        <title>The genomes of Oryza sativa: a history of duplications.</title>
        <authorList>
            <person name="Yu J."/>
            <person name="Wang J."/>
            <person name="Lin W."/>
            <person name="Li S."/>
            <person name="Li H."/>
            <person name="Zhou J."/>
            <person name="Ni P."/>
            <person name="Dong W."/>
            <person name="Hu S."/>
            <person name="Zeng C."/>
            <person name="Zhang J."/>
            <person name="Zhang Y."/>
            <person name="Li R."/>
            <person name="Xu Z."/>
            <person name="Li S."/>
            <person name="Li X."/>
            <person name="Zheng H."/>
            <person name="Cong L."/>
            <person name="Lin L."/>
            <person name="Yin J."/>
            <person name="Geng J."/>
            <person name="Li G."/>
            <person name="Shi J."/>
            <person name="Liu J."/>
            <person name="Lv H."/>
            <person name="Li J."/>
            <person name="Wang J."/>
            <person name="Deng Y."/>
            <person name="Ran L."/>
            <person name="Shi X."/>
            <person name="Wang X."/>
            <person name="Wu Q."/>
            <person name="Li C."/>
            <person name="Ren X."/>
            <person name="Wang J."/>
            <person name="Wang X."/>
            <person name="Li D."/>
            <person name="Liu D."/>
            <person name="Zhang X."/>
            <person name="Ji Z."/>
            <person name="Zhao W."/>
            <person name="Sun Y."/>
            <person name="Zhang Z."/>
            <person name="Bao J."/>
            <person name="Han Y."/>
            <person name="Dong L."/>
            <person name="Ji J."/>
            <person name="Chen P."/>
            <person name="Wu S."/>
            <person name="Liu J."/>
            <person name="Xiao Y."/>
            <person name="Bu D."/>
            <person name="Tan J."/>
            <person name="Yang L."/>
            <person name="Ye C."/>
            <person name="Zhang J."/>
            <person name="Xu J."/>
            <person name="Zhou Y."/>
            <person name="Yu Y."/>
            <person name="Zhang B."/>
            <person name="Zhuang S."/>
            <person name="Wei H."/>
            <person name="Liu B."/>
            <person name="Lei M."/>
            <person name="Yu H."/>
            <person name="Li Y."/>
            <person name="Xu H."/>
            <person name="Wei S."/>
            <person name="He X."/>
            <person name="Fang L."/>
            <person name="Zhang Z."/>
            <person name="Zhang Y."/>
            <person name="Huang X."/>
            <person name="Su Z."/>
            <person name="Tong W."/>
            <person name="Li J."/>
            <person name="Tong Z."/>
            <person name="Li S."/>
            <person name="Ye J."/>
            <person name="Wang L."/>
            <person name="Fang L."/>
            <person name="Lei T."/>
            <person name="Chen C.-S."/>
            <person name="Chen H.-C."/>
            <person name="Xu Z."/>
            <person name="Li H."/>
            <person name="Huang H."/>
            <person name="Zhang F."/>
            <person name="Xu H."/>
            <person name="Li N."/>
            <person name="Zhao C."/>
            <person name="Li S."/>
            <person name="Dong L."/>
            <person name="Huang Y."/>
            <person name="Li L."/>
            <person name="Xi Y."/>
            <person name="Qi Q."/>
            <person name="Li W."/>
            <person name="Zhang B."/>
            <person name="Hu W."/>
            <person name="Zhang Y."/>
            <person name="Tian X."/>
            <person name="Jiao Y."/>
            <person name="Liang X."/>
            <person name="Jin J."/>
            <person name="Gao L."/>
            <person name="Zheng W."/>
            <person name="Hao B."/>
            <person name="Liu S.-M."/>
            <person name="Wang W."/>
            <person name="Yuan L."/>
            <person name="Cao M."/>
            <person name="McDermott J."/>
            <person name="Samudrala R."/>
            <person name="Wang J."/>
            <person name="Wong G.K.-S."/>
            <person name="Yang H."/>
        </authorList>
    </citation>
    <scope>NUCLEOTIDE SEQUENCE [LARGE SCALE GENOMIC DNA]</scope>
    <source>
        <strain>cv. 93-11</strain>
    </source>
</reference>
<feature type="chain" id="PRO_0000426031" description="Mini zinc finger protein 2">
    <location>
        <begin position="1"/>
        <end position="105"/>
    </location>
</feature>
<feature type="zinc finger region" description="ZF-HD dimerization-type; degenerate" evidence="2">
    <location>
        <begin position="35"/>
        <end position="84"/>
    </location>
</feature>
<feature type="region of interest" description="Disordered" evidence="3">
    <location>
        <begin position="1"/>
        <end position="29"/>
    </location>
</feature>
<dbReference type="EMBL" id="CM000137">
    <property type="protein sequence ID" value="EEC68778.1"/>
    <property type="molecule type" value="Genomic_DNA"/>
</dbReference>
<dbReference type="STRING" id="39946.B8BLT3"/>
<dbReference type="EnsemblPlants" id="BGIOSGA036923-TA">
    <property type="protein sequence ID" value="BGIOSGA036923-PA"/>
    <property type="gene ID" value="BGIOSGA036923"/>
</dbReference>
<dbReference type="EnsemblPlants" id="OsGoSa_12g0001760.01">
    <property type="protein sequence ID" value="OsGoSa_12g0001760.01"/>
    <property type="gene ID" value="OsGoSa_12g0001760"/>
</dbReference>
<dbReference type="EnsemblPlants" id="OsIR64_12g0001730.01">
    <property type="protein sequence ID" value="OsIR64_12g0001730.01"/>
    <property type="gene ID" value="OsIR64_12g0001730"/>
</dbReference>
<dbReference type="EnsemblPlants" id="OsKYG_12g0001780.01">
    <property type="protein sequence ID" value="OsKYG_12g0001780.01"/>
    <property type="gene ID" value="OsKYG_12g0001780"/>
</dbReference>
<dbReference type="EnsemblPlants" id="OsLiXu_12g0001730.01">
    <property type="protein sequence ID" value="OsLiXu_12g0001730.01"/>
    <property type="gene ID" value="OsLiXu_12g0001730"/>
</dbReference>
<dbReference type="EnsemblPlants" id="OsMH63_12G001770_01">
    <property type="protein sequence ID" value="OsMH63_12G001770_01"/>
    <property type="gene ID" value="OsMH63_12G001770"/>
</dbReference>
<dbReference type="EnsemblPlants" id="OsPr106_12g0001740.01">
    <property type="protein sequence ID" value="OsPr106_12g0001740.01"/>
    <property type="gene ID" value="OsPr106_12g0001740"/>
</dbReference>
<dbReference type="Gramene" id="BGIOSGA036923-TA">
    <property type="protein sequence ID" value="BGIOSGA036923-PA"/>
    <property type="gene ID" value="BGIOSGA036923"/>
</dbReference>
<dbReference type="Gramene" id="OsGoSa_12g0001760.01">
    <property type="protein sequence ID" value="OsGoSa_12g0001760.01"/>
    <property type="gene ID" value="OsGoSa_12g0001760"/>
</dbReference>
<dbReference type="Gramene" id="OsIR64_12g0001730.01">
    <property type="protein sequence ID" value="OsIR64_12g0001730.01"/>
    <property type="gene ID" value="OsIR64_12g0001730"/>
</dbReference>
<dbReference type="Gramene" id="OsKYG_12g0001780.01">
    <property type="protein sequence ID" value="OsKYG_12g0001780.01"/>
    <property type="gene ID" value="OsKYG_12g0001780"/>
</dbReference>
<dbReference type="Gramene" id="OsLiXu_12g0001730.01">
    <property type="protein sequence ID" value="OsLiXu_12g0001730.01"/>
    <property type="gene ID" value="OsLiXu_12g0001730"/>
</dbReference>
<dbReference type="Gramene" id="OsMH63_12G001770_01">
    <property type="protein sequence ID" value="OsMH63_12G001770_01"/>
    <property type="gene ID" value="OsMH63_12G001770"/>
</dbReference>
<dbReference type="Gramene" id="OsPr106_12g0001740.01">
    <property type="protein sequence ID" value="OsPr106_12g0001740.01"/>
    <property type="gene ID" value="OsPr106_12g0001740"/>
</dbReference>
<dbReference type="HOGENOM" id="CLU_123565_2_0_1"/>
<dbReference type="OMA" id="VCDCSSP"/>
<dbReference type="OrthoDB" id="682018at2759"/>
<dbReference type="Proteomes" id="UP000007015">
    <property type="component" value="Chromosome 12"/>
</dbReference>
<dbReference type="GO" id="GO:0005737">
    <property type="term" value="C:cytoplasm"/>
    <property type="evidence" value="ECO:0007669"/>
    <property type="project" value="UniProtKB-SubCell"/>
</dbReference>
<dbReference type="GO" id="GO:0005634">
    <property type="term" value="C:nucleus"/>
    <property type="evidence" value="ECO:0007669"/>
    <property type="project" value="TreeGrafter"/>
</dbReference>
<dbReference type="GO" id="GO:0003700">
    <property type="term" value="F:DNA-binding transcription factor activity"/>
    <property type="evidence" value="ECO:0007669"/>
    <property type="project" value="TreeGrafter"/>
</dbReference>
<dbReference type="GO" id="GO:0000976">
    <property type="term" value="F:transcription cis-regulatory region binding"/>
    <property type="evidence" value="ECO:0007669"/>
    <property type="project" value="TreeGrafter"/>
</dbReference>
<dbReference type="GO" id="GO:0008270">
    <property type="term" value="F:zinc ion binding"/>
    <property type="evidence" value="ECO:0007669"/>
    <property type="project" value="UniProtKB-KW"/>
</dbReference>
<dbReference type="GO" id="GO:0050793">
    <property type="term" value="P:regulation of developmental process"/>
    <property type="evidence" value="ECO:0007669"/>
    <property type="project" value="TreeGrafter"/>
</dbReference>
<dbReference type="InterPro" id="IPR006456">
    <property type="entry name" value="ZF_HD_homeobox_Cys/His_dimer"/>
</dbReference>
<dbReference type="NCBIfam" id="TIGR01566">
    <property type="entry name" value="ZF_HD_prot_N"/>
    <property type="match status" value="1"/>
</dbReference>
<dbReference type="PANTHER" id="PTHR31948:SF162">
    <property type="entry name" value="MINI ZINC FINGER PROTEIN 2"/>
    <property type="match status" value="1"/>
</dbReference>
<dbReference type="PANTHER" id="PTHR31948">
    <property type="entry name" value="ZINC-FINGER HOMEODOMAIN PROTEIN 2"/>
    <property type="match status" value="1"/>
</dbReference>
<dbReference type="Pfam" id="PF04770">
    <property type="entry name" value="ZF-HD_dimer"/>
    <property type="match status" value="1"/>
</dbReference>
<dbReference type="PROSITE" id="PS51523">
    <property type="entry name" value="ZF_HD_DIMER"/>
    <property type="match status" value="1"/>
</dbReference>
<protein>
    <recommendedName>
        <fullName>Mini zinc finger protein 2</fullName>
    </recommendedName>
</protein>
<proteinExistence type="inferred from homology"/>
<organism>
    <name type="scientific">Oryza sativa subsp. indica</name>
    <name type="common">Rice</name>
    <dbReference type="NCBI Taxonomy" id="39946"/>
    <lineage>
        <taxon>Eukaryota</taxon>
        <taxon>Viridiplantae</taxon>
        <taxon>Streptophyta</taxon>
        <taxon>Embryophyta</taxon>
        <taxon>Tracheophyta</taxon>
        <taxon>Spermatophyta</taxon>
        <taxon>Magnoliopsida</taxon>
        <taxon>Liliopsida</taxon>
        <taxon>Poales</taxon>
        <taxon>Poaceae</taxon>
        <taxon>BOP clade</taxon>
        <taxon>Oryzoideae</taxon>
        <taxon>Oryzeae</taxon>
        <taxon>Oryzinae</taxon>
        <taxon>Oryza</taxon>
        <taxon>Oryza sativa</taxon>
    </lineage>
</organism>
<comment type="function">
    <text evidence="1">Inhibits zinc finger homeodomain (ZHD) transcription factors, by interacting with them to prevent both their nuclear localization and their DNA-binding properties.</text>
</comment>
<comment type="subunit">
    <text evidence="1">Homo- and heterodimers.</text>
</comment>
<comment type="subcellular location">
    <subcellularLocation>
        <location evidence="1">Cytoplasm</location>
    </subcellularLocation>
</comment>
<name>MIF2_ORYSI</name>
<gene>
    <name type="primary">MIF2</name>
    <name type="ORF">OsI_37313</name>
</gene>
<sequence>MGPQQDRSAAKPYANGSTAAAAAAGRKENNKVVRYRECQRNHAASIGGHAVDGCREFMASGADGTAAALLCAACGCHQSFHRREVEAAAAECDCSSDTSSGTGRR</sequence>
<evidence type="ECO:0000250" key="1"/>
<evidence type="ECO:0000255" key="2">
    <source>
        <dbReference type="PROSITE-ProRule" id="PRU00856"/>
    </source>
</evidence>
<evidence type="ECO:0000256" key="3">
    <source>
        <dbReference type="SAM" id="MobiDB-lite"/>
    </source>
</evidence>
<accession>B8BLT3</accession>
<keyword id="KW-0963">Cytoplasm</keyword>
<keyword id="KW-0479">Metal-binding</keyword>
<keyword id="KW-1185">Reference proteome</keyword>
<keyword id="KW-0862">Zinc</keyword>
<keyword id="KW-0863">Zinc-finger</keyword>